<name>PYRG_SHIDS</name>
<reference key="1">
    <citation type="journal article" date="2005" name="Nucleic Acids Res.">
        <title>Genome dynamics and diversity of Shigella species, the etiologic agents of bacillary dysentery.</title>
        <authorList>
            <person name="Yang F."/>
            <person name="Yang J."/>
            <person name="Zhang X."/>
            <person name="Chen L."/>
            <person name="Jiang Y."/>
            <person name="Yan Y."/>
            <person name="Tang X."/>
            <person name="Wang J."/>
            <person name="Xiong Z."/>
            <person name="Dong J."/>
            <person name="Xue Y."/>
            <person name="Zhu Y."/>
            <person name="Xu X."/>
            <person name="Sun L."/>
            <person name="Chen S."/>
            <person name="Nie H."/>
            <person name="Peng J."/>
            <person name="Xu J."/>
            <person name="Wang Y."/>
            <person name="Yuan Z."/>
            <person name="Wen Y."/>
            <person name="Yao Z."/>
            <person name="Shen Y."/>
            <person name="Qiang B."/>
            <person name="Hou Y."/>
            <person name="Yu J."/>
            <person name="Jin Q."/>
        </authorList>
    </citation>
    <scope>NUCLEOTIDE SEQUENCE [LARGE SCALE GENOMIC DNA]</scope>
    <source>
        <strain>Sd197</strain>
    </source>
</reference>
<evidence type="ECO:0000255" key="1">
    <source>
        <dbReference type="HAMAP-Rule" id="MF_01227"/>
    </source>
</evidence>
<sequence length="545" mass="60374">MTTNYIFVTGGVVSSLGKGIAAASLAAILEARGLNVTIMKLDPYINVDPGTMSPIQHGEVFVTEDGAETDLDLGHYERFIRTKMSRRNNFTTGRIYSDVLRKERRGDYLGATVQVIPHITNAIKERVLEGGEGHDVVLVEIGGTVGDIESLPFLEAIRQMAVEIGREHTLFMHLTLVPYMAASGEVKTKPTQHSVKELLSIGIQPDILICRSDRAVPANERAKIALFCNVPEKAVISLKDVDSIYKIPGLLKSQGLDDYICKRFSLNCPEANLSEWEQVIFEEANPVSEVTIGMVGKYIELPDAYKSVIEALKHGGLKNRVSVNIKLIDSQDVETRGVEILKGLDAILVPGGFGYRGVEGMITTARFARENNIPYLGICLGMQVALIDYARHVANMENANSTEFVPDCKYPVVALITEWRDENGNVEVRSEKSDLGGTMRLGAQQCQLVDDSLVRQLYNAPTIVERHRHRYEVNNMLLKQIEDAGLRVAGRSGDDQLVEIIEVPNHPWFVACQFHPEFTSTPRDGHPLFAGFVKAASEFQKRQAK</sequence>
<proteinExistence type="inferred from homology"/>
<keyword id="KW-0067">ATP-binding</keyword>
<keyword id="KW-0315">Glutamine amidotransferase</keyword>
<keyword id="KW-0436">Ligase</keyword>
<keyword id="KW-0460">Magnesium</keyword>
<keyword id="KW-0479">Metal-binding</keyword>
<keyword id="KW-0547">Nucleotide-binding</keyword>
<keyword id="KW-0665">Pyrimidine biosynthesis</keyword>
<keyword id="KW-1185">Reference proteome</keyword>
<feature type="chain" id="PRO_0000266218" description="CTP synthase">
    <location>
        <begin position="1"/>
        <end position="545"/>
    </location>
</feature>
<feature type="domain" description="Glutamine amidotransferase type-1" evidence="1">
    <location>
        <begin position="291"/>
        <end position="542"/>
    </location>
</feature>
<feature type="region of interest" description="Amidoligase domain" evidence="1">
    <location>
        <begin position="1"/>
        <end position="266"/>
    </location>
</feature>
<feature type="active site" description="Nucleophile; for glutamine hydrolysis" evidence="1">
    <location>
        <position position="379"/>
    </location>
</feature>
<feature type="active site" evidence="1">
    <location>
        <position position="515"/>
    </location>
</feature>
<feature type="active site" evidence="1">
    <location>
        <position position="517"/>
    </location>
</feature>
<feature type="binding site" evidence="1">
    <location>
        <position position="14"/>
    </location>
    <ligand>
        <name>CTP</name>
        <dbReference type="ChEBI" id="CHEBI:37563"/>
        <note>allosteric inhibitor</note>
    </ligand>
</feature>
<feature type="binding site" evidence="1">
    <location>
        <position position="14"/>
    </location>
    <ligand>
        <name>UTP</name>
        <dbReference type="ChEBI" id="CHEBI:46398"/>
    </ligand>
</feature>
<feature type="binding site" evidence="1">
    <location>
        <begin position="15"/>
        <end position="20"/>
    </location>
    <ligand>
        <name>ATP</name>
        <dbReference type="ChEBI" id="CHEBI:30616"/>
    </ligand>
</feature>
<feature type="binding site" evidence="1">
    <location>
        <position position="72"/>
    </location>
    <ligand>
        <name>ATP</name>
        <dbReference type="ChEBI" id="CHEBI:30616"/>
    </ligand>
</feature>
<feature type="binding site" evidence="1">
    <location>
        <position position="72"/>
    </location>
    <ligand>
        <name>Mg(2+)</name>
        <dbReference type="ChEBI" id="CHEBI:18420"/>
    </ligand>
</feature>
<feature type="binding site" evidence="1">
    <location>
        <position position="140"/>
    </location>
    <ligand>
        <name>Mg(2+)</name>
        <dbReference type="ChEBI" id="CHEBI:18420"/>
    </ligand>
</feature>
<feature type="binding site" evidence="1">
    <location>
        <begin position="147"/>
        <end position="149"/>
    </location>
    <ligand>
        <name>CTP</name>
        <dbReference type="ChEBI" id="CHEBI:37563"/>
        <note>allosteric inhibitor</note>
    </ligand>
</feature>
<feature type="binding site" evidence="1">
    <location>
        <begin position="187"/>
        <end position="192"/>
    </location>
    <ligand>
        <name>CTP</name>
        <dbReference type="ChEBI" id="CHEBI:37563"/>
        <note>allosteric inhibitor</note>
    </ligand>
</feature>
<feature type="binding site" evidence="1">
    <location>
        <begin position="187"/>
        <end position="192"/>
    </location>
    <ligand>
        <name>UTP</name>
        <dbReference type="ChEBI" id="CHEBI:46398"/>
    </ligand>
</feature>
<feature type="binding site" evidence="1">
    <location>
        <position position="223"/>
    </location>
    <ligand>
        <name>CTP</name>
        <dbReference type="ChEBI" id="CHEBI:37563"/>
        <note>allosteric inhibitor</note>
    </ligand>
</feature>
<feature type="binding site" evidence="1">
    <location>
        <position position="223"/>
    </location>
    <ligand>
        <name>UTP</name>
        <dbReference type="ChEBI" id="CHEBI:46398"/>
    </ligand>
</feature>
<feature type="binding site" evidence="1">
    <location>
        <begin position="239"/>
        <end position="241"/>
    </location>
    <ligand>
        <name>ATP</name>
        <dbReference type="ChEBI" id="CHEBI:30616"/>
    </ligand>
</feature>
<feature type="binding site" evidence="1">
    <location>
        <position position="352"/>
    </location>
    <ligand>
        <name>L-glutamine</name>
        <dbReference type="ChEBI" id="CHEBI:58359"/>
    </ligand>
</feature>
<feature type="binding site" evidence="1">
    <location>
        <begin position="380"/>
        <end position="383"/>
    </location>
    <ligand>
        <name>L-glutamine</name>
        <dbReference type="ChEBI" id="CHEBI:58359"/>
    </ligand>
</feature>
<feature type="binding site" evidence="1">
    <location>
        <position position="403"/>
    </location>
    <ligand>
        <name>L-glutamine</name>
        <dbReference type="ChEBI" id="CHEBI:58359"/>
    </ligand>
</feature>
<feature type="binding site" evidence="1">
    <location>
        <position position="470"/>
    </location>
    <ligand>
        <name>L-glutamine</name>
        <dbReference type="ChEBI" id="CHEBI:58359"/>
    </ligand>
</feature>
<gene>
    <name evidence="1" type="primary">pyrG</name>
    <name type="ordered locus">SDY_2997</name>
</gene>
<dbReference type="EC" id="6.3.4.2" evidence="1"/>
<dbReference type="EMBL" id="CP000034">
    <property type="protein sequence ID" value="ABB63020.1"/>
    <property type="molecule type" value="Genomic_DNA"/>
</dbReference>
<dbReference type="RefSeq" id="WP_000210878.1">
    <property type="nucleotide sequence ID" value="NC_007606.1"/>
</dbReference>
<dbReference type="RefSeq" id="YP_404511.1">
    <property type="nucleotide sequence ID" value="NC_007606.1"/>
</dbReference>
<dbReference type="SMR" id="Q32CD5"/>
<dbReference type="STRING" id="300267.SDY_2997"/>
<dbReference type="MEROPS" id="C26.964"/>
<dbReference type="EnsemblBacteria" id="ABB63020">
    <property type="protein sequence ID" value="ABB63020"/>
    <property type="gene ID" value="SDY_2997"/>
</dbReference>
<dbReference type="GeneID" id="93779218"/>
<dbReference type="KEGG" id="sdy:SDY_2997"/>
<dbReference type="PATRIC" id="fig|300267.13.peg.3596"/>
<dbReference type="HOGENOM" id="CLU_011675_5_0_6"/>
<dbReference type="UniPathway" id="UPA00159">
    <property type="reaction ID" value="UER00277"/>
</dbReference>
<dbReference type="Proteomes" id="UP000002716">
    <property type="component" value="Chromosome"/>
</dbReference>
<dbReference type="GO" id="GO:0005829">
    <property type="term" value="C:cytosol"/>
    <property type="evidence" value="ECO:0007669"/>
    <property type="project" value="TreeGrafter"/>
</dbReference>
<dbReference type="GO" id="GO:0005524">
    <property type="term" value="F:ATP binding"/>
    <property type="evidence" value="ECO:0007669"/>
    <property type="project" value="UniProtKB-KW"/>
</dbReference>
<dbReference type="GO" id="GO:0003883">
    <property type="term" value="F:CTP synthase activity"/>
    <property type="evidence" value="ECO:0007669"/>
    <property type="project" value="UniProtKB-UniRule"/>
</dbReference>
<dbReference type="GO" id="GO:0004359">
    <property type="term" value="F:glutaminase activity"/>
    <property type="evidence" value="ECO:0007669"/>
    <property type="project" value="RHEA"/>
</dbReference>
<dbReference type="GO" id="GO:0042802">
    <property type="term" value="F:identical protein binding"/>
    <property type="evidence" value="ECO:0007669"/>
    <property type="project" value="TreeGrafter"/>
</dbReference>
<dbReference type="GO" id="GO:0046872">
    <property type="term" value="F:metal ion binding"/>
    <property type="evidence" value="ECO:0007669"/>
    <property type="project" value="UniProtKB-KW"/>
</dbReference>
<dbReference type="GO" id="GO:0044210">
    <property type="term" value="P:'de novo' CTP biosynthetic process"/>
    <property type="evidence" value="ECO:0007669"/>
    <property type="project" value="UniProtKB-UniRule"/>
</dbReference>
<dbReference type="GO" id="GO:0019856">
    <property type="term" value="P:pyrimidine nucleobase biosynthetic process"/>
    <property type="evidence" value="ECO:0007669"/>
    <property type="project" value="TreeGrafter"/>
</dbReference>
<dbReference type="CDD" id="cd03113">
    <property type="entry name" value="CTPS_N"/>
    <property type="match status" value="1"/>
</dbReference>
<dbReference type="CDD" id="cd01746">
    <property type="entry name" value="GATase1_CTP_Synthase"/>
    <property type="match status" value="1"/>
</dbReference>
<dbReference type="FunFam" id="3.40.50.300:FF:000009">
    <property type="entry name" value="CTP synthase"/>
    <property type="match status" value="1"/>
</dbReference>
<dbReference type="FunFam" id="3.40.50.880:FF:000002">
    <property type="entry name" value="CTP synthase"/>
    <property type="match status" value="1"/>
</dbReference>
<dbReference type="Gene3D" id="3.40.50.880">
    <property type="match status" value="1"/>
</dbReference>
<dbReference type="Gene3D" id="3.40.50.300">
    <property type="entry name" value="P-loop containing nucleotide triphosphate hydrolases"/>
    <property type="match status" value="1"/>
</dbReference>
<dbReference type="HAMAP" id="MF_01227">
    <property type="entry name" value="PyrG"/>
    <property type="match status" value="1"/>
</dbReference>
<dbReference type="InterPro" id="IPR029062">
    <property type="entry name" value="Class_I_gatase-like"/>
</dbReference>
<dbReference type="InterPro" id="IPR004468">
    <property type="entry name" value="CTP_synthase"/>
</dbReference>
<dbReference type="InterPro" id="IPR017456">
    <property type="entry name" value="CTP_synthase_N"/>
</dbReference>
<dbReference type="InterPro" id="IPR017926">
    <property type="entry name" value="GATASE"/>
</dbReference>
<dbReference type="InterPro" id="IPR033828">
    <property type="entry name" value="GATase1_CTP_Synthase"/>
</dbReference>
<dbReference type="InterPro" id="IPR027417">
    <property type="entry name" value="P-loop_NTPase"/>
</dbReference>
<dbReference type="NCBIfam" id="NF003792">
    <property type="entry name" value="PRK05380.1"/>
    <property type="match status" value="1"/>
</dbReference>
<dbReference type="NCBIfam" id="TIGR00337">
    <property type="entry name" value="PyrG"/>
    <property type="match status" value="1"/>
</dbReference>
<dbReference type="PANTHER" id="PTHR11550">
    <property type="entry name" value="CTP SYNTHASE"/>
    <property type="match status" value="1"/>
</dbReference>
<dbReference type="PANTHER" id="PTHR11550:SF0">
    <property type="entry name" value="CTP SYNTHASE-RELATED"/>
    <property type="match status" value="1"/>
</dbReference>
<dbReference type="Pfam" id="PF06418">
    <property type="entry name" value="CTP_synth_N"/>
    <property type="match status" value="1"/>
</dbReference>
<dbReference type="Pfam" id="PF00117">
    <property type="entry name" value="GATase"/>
    <property type="match status" value="1"/>
</dbReference>
<dbReference type="SUPFAM" id="SSF52317">
    <property type="entry name" value="Class I glutamine amidotransferase-like"/>
    <property type="match status" value="1"/>
</dbReference>
<dbReference type="SUPFAM" id="SSF52540">
    <property type="entry name" value="P-loop containing nucleoside triphosphate hydrolases"/>
    <property type="match status" value="1"/>
</dbReference>
<dbReference type="PROSITE" id="PS51273">
    <property type="entry name" value="GATASE_TYPE_1"/>
    <property type="match status" value="1"/>
</dbReference>
<accession>Q32CD5</accession>
<organism>
    <name type="scientific">Shigella dysenteriae serotype 1 (strain Sd197)</name>
    <dbReference type="NCBI Taxonomy" id="300267"/>
    <lineage>
        <taxon>Bacteria</taxon>
        <taxon>Pseudomonadati</taxon>
        <taxon>Pseudomonadota</taxon>
        <taxon>Gammaproteobacteria</taxon>
        <taxon>Enterobacterales</taxon>
        <taxon>Enterobacteriaceae</taxon>
        <taxon>Shigella</taxon>
    </lineage>
</organism>
<comment type="function">
    <text evidence="1">Catalyzes the ATP-dependent amination of UTP to CTP with either L-glutamine or ammonia as the source of nitrogen. Regulates intracellular CTP levels through interactions with the four ribonucleotide triphosphates.</text>
</comment>
<comment type="catalytic activity">
    <reaction evidence="1">
        <text>UTP + L-glutamine + ATP + H2O = CTP + L-glutamate + ADP + phosphate + 2 H(+)</text>
        <dbReference type="Rhea" id="RHEA:26426"/>
        <dbReference type="ChEBI" id="CHEBI:15377"/>
        <dbReference type="ChEBI" id="CHEBI:15378"/>
        <dbReference type="ChEBI" id="CHEBI:29985"/>
        <dbReference type="ChEBI" id="CHEBI:30616"/>
        <dbReference type="ChEBI" id="CHEBI:37563"/>
        <dbReference type="ChEBI" id="CHEBI:43474"/>
        <dbReference type="ChEBI" id="CHEBI:46398"/>
        <dbReference type="ChEBI" id="CHEBI:58359"/>
        <dbReference type="ChEBI" id="CHEBI:456216"/>
        <dbReference type="EC" id="6.3.4.2"/>
    </reaction>
</comment>
<comment type="catalytic activity">
    <reaction evidence="1">
        <text>L-glutamine + H2O = L-glutamate + NH4(+)</text>
        <dbReference type="Rhea" id="RHEA:15889"/>
        <dbReference type="ChEBI" id="CHEBI:15377"/>
        <dbReference type="ChEBI" id="CHEBI:28938"/>
        <dbReference type="ChEBI" id="CHEBI:29985"/>
        <dbReference type="ChEBI" id="CHEBI:58359"/>
    </reaction>
</comment>
<comment type="catalytic activity">
    <reaction evidence="1">
        <text>UTP + NH4(+) + ATP = CTP + ADP + phosphate + 2 H(+)</text>
        <dbReference type="Rhea" id="RHEA:16597"/>
        <dbReference type="ChEBI" id="CHEBI:15378"/>
        <dbReference type="ChEBI" id="CHEBI:28938"/>
        <dbReference type="ChEBI" id="CHEBI:30616"/>
        <dbReference type="ChEBI" id="CHEBI:37563"/>
        <dbReference type="ChEBI" id="CHEBI:43474"/>
        <dbReference type="ChEBI" id="CHEBI:46398"/>
        <dbReference type="ChEBI" id="CHEBI:456216"/>
    </reaction>
</comment>
<comment type="activity regulation">
    <text evidence="1">Allosterically activated by GTP, when glutamine is the substrate; GTP has no effect on the reaction when ammonia is the substrate. The allosteric effector GTP functions by stabilizing the protein conformation that binds the tetrahedral intermediate(s) formed during glutamine hydrolysis. Inhibited by the product CTP, via allosteric rather than competitive inhibition.</text>
</comment>
<comment type="pathway">
    <text evidence="1">Pyrimidine metabolism; CTP biosynthesis via de novo pathway; CTP from UDP: step 2/2.</text>
</comment>
<comment type="subunit">
    <text evidence="1">Homotetramer.</text>
</comment>
<comment type="miscellaneous">
    <text evidence="1">CTPSs have evolved a hybrid strategy for distinguishing between UTP and CTP. The overlapping regions of the product feedback inhibitory and substrate sites recognize a common feature in both compounds, the triphosphate moiety. To differentiate isosteric substrate and product pyrimidine rings, an additional pocket far from the expected kinase/ligase catalytic site, specifically recognizes the cytosine and ribose portions of the product inhibitor.</text>
</comment>
<comment type="similarity">
    <text evidence="1">Belongs to the CTP synthase family.</text>
</comment>
<protein>
    <recommendedName>
        <fullName evidence="1">CTP synthase</fullName>
        <ecNumber evidence="1">6.3.4.2</ecNumber>
    </recommendedName>
    <alternativeName>
        <fullName evidence="1">Cytidine 5'-triphosphate synthase</fullName>
    </alternativeName>
    <alternativeName>
        <fullName evidence="1">Cytidine triphosphate synthetase</fullName>
        <shortName evidence="1">CTP synthetase</shortName>
        <shortName evidence="1">CTPS</shortName>
    </alternativeName>
    <alternativeName>
        <fullName evidence="1">UTP--ammonia ligase</fullName>
    </alternativeName>
</protein>